<proteinExistence type="inferred from homology"/>
<gene>
    <name evidence="1" type="primary">hisC</name>
    <name type="ordered locus">MW0686</name>
</gene>
<organism>
    <name type="scientific">Staphylococcus aureus (strain MW2)</name>
    <dbReference type="NCBI Taxonomy" id="196620"/>
    <lineage>
        <taxon>Bacteria</taxon>
        <taxon>Bacillati</taxon>
        <taxon>Bacillota</taxon>
        <taxon>Bacilli</taxon>
        <taxon>Bacillales</taxon>
        <taxon>Staphylococcaceae</taxon>
        <taxon>Staphylococcus</taxon>
    </lineage>
</organism>
<name>HIS8_STAAW</name>
<keyword id="KW-0028">Amino-acid biosynthesis</keyword>
<keyword id="KW-0032">Aminotransferase</keyword>
<keyword id="KW-0368">Histidine biosynthesis</keyword>
<keyword id="KW-0663">Pyridoxal phosphate</keyword>
<keyword id="KW-0808">Transferase</keyword>
<feature type="chain" id="PRO_0000153455" description="Histidinol-phosphate aminotransferase">
    <location>
        <begin position="1"/>
        <end position="352"/>
    </location>
</feature>
<feature type="modified residue" description="N6-(pyridoxal phosphate)lysine" evidence="1">
    <location>
        <position position="221"/>
    </location>
</feature>
<dbReference type="EC" id="2.6.1.9" evidence="1"/>
<dbReference type="EMBL" id="BA000033">
    <property type="protein sequence ID" value="BAB94551.1"/>
    <property type="molecule type" value="Genomic_DNA"/>
</dbReference>
<dbReference type="RefSeq" id="WP_000663032.1">
    <property type="nucleotide sequence ID" value="NC_003923.1"/>
</dbReference>
<dbReference type="SMR" id="Q8NXN3"/>
<dbReference type="KEGG" id="sam:MW0686"/>
<dbReference type="HOGENOM" id="CLU_017584_3_3_9"/>
<dbReference type="UniPathway" id="UPA00031">
    <property type="reaction ID" value="UER00012"/>
</dbReference>
<dbReference type="GO" id="GO:0004400">
    <property type="term" value="F:histidinol-phosphate transaminase activity"/>
    <property type="evidence" value="ECO:0007669"/>
    <property type="project" value="UniProtKB-UniRule"/>
</dbReference>
<dbReference type="GO" id="GO:0030170">
    <property type="term" value="F:pyridoxal phosphate binding"/>
    <property type="evidence" value="ECO:0007669"/>
    <property type="project" value="InterPro"/>
</dbReference>
<dbReference type="GO" id="GO:0000105">
    <property type="term" value="P:L-histidine biosynthetic process"/>
    <property type="evidence" value="ECO:0007669"/>
    <property type="project" value="UniProtKB-UniRule"/>
</dbReference>
<dbReference type="CDD" id="cd00609">
    <property type="entry name" value="AAT_like"/>
    <property type="match status" value="1"/>
</dbReference>
<dbReference type="Gene3D" id="3.90.1150.10">
    <property type="entry name" value="Aspartate Aminotransferase, domain 1"/>
    <property type="match status" value="1"/>
</dbReference>
<dbReference type="Gene3D" id="3.40.640.10">
    <property type="entry name" value="Type I PLP-dependent aspartate aminotransferase-like (Major domain)"/>
    <property type="match status" value="1"/>
</dbReference>
<dbReference type="HAMAP" id="MF_01023">
    <property type="entry name" value="HisC_aminotrans_2"/>
    <property type="match status" value="1"/>
</dbReference>
<dbReference type="InterPro" id="IPR001917">
    <property type="entry name" value="Aminotrans_II_pyridoxalP_BS"/>
</dbReference>
<dbReference type="InterPro" id="IPR004839">
    <property type="entry name" value="Aminotransferase_I/II_large"/>
</dbReference>
<dbReference type="InterPro" id="IPR005861">
    <property type="entry name" value="HisP_aminotrans"/>
</dbReference>
<dbReference type="InterPro" id="IPR050106">
    <property type="entry name" value="HistidinolP_aminotransfase"/>
</dbReference>
<dbReference type="InterPro" id="IPR015424">
    <property type="entry name" value="PyrdxlP-dep_Trfase"/>
</dbReference>
<dbReference type="InterPro" id="IPR015421">
    <property type="entry name" value="PyrdxlP-dep_Trfase_major"/>
</dbReference>
<dbReference type="InterPro" id="IPR015422">
    <property type="entry name" value="PyrdxlP-dep_Trfase_small"/>
</dbReference>
<dbReference type="NCBIfam" id="TIGR01141">
    <property type="entry name" value="hisC"/>
    <property type="match status" value="1"/>
</dbReference>
<dbReference type="PANTHER" id="PTHR43643:SF3">
    <property type="entry name" value="HISTIDINOL-PHOSPHATE AMINOTRANSFERASE"/>
    <property type="match status" value="1"/>
</dbReference>
<dbReference type="PANTHER" id="PTHR43643">
    <property type="entry name" value="HISTIDINOL-PHOSPHATE AMINOTRANSFERASE 2"/>
    <property type="match status" value="1"/>
</dbReference>
<dbReference type="Pfam" id="PF00155">
    <property type="entry name" value="Aminotran_1_2"/>
    <property type="match status" value="1"/>
</dbReference>
<dbReference type="SUPFAM" id="SSF53383">
    <property type="entry name" value="PLP-dependent transferases"/>
    <property type="match status" value="1"/>
</dbReference>
<dbReference type="PROSITE" id="PS00599">
    <property type="entry name" value="AA_TRANSFER_CLASS_2"/>
    <property type="match status" value="1"/>
</dbReference>
<sequence>MKEQLNQLSAYQPGLSPRALKEKYGIEGDLYKLASNENLYGPSPKVKEAISAHLDELYYYPETGSPTLKAAISKHLNVDQSRILFGAGLDEVILMISRAVLTPGDTIVTSEATFGQYYHNAIVESANVIQVPLKDGGFDLEGILKEVNEDTSLVWLCNPNNPTGTYFNHESLDSFLSQVPPHVPVIIDEAYFEFVTEEDYPDTLALQQKYDNAFLLRTFSKAYGLAGLRVGYVVASEHAIEKWNIIRPPFNVTRISEYAAVAALEDQQYLKEVTHKNSVERERFYQLPQSEYFLPSQTNFIFVKTKRVNELYEALLNVGCITRPFPTGVRITIGFKEQNDKMLEVLSNFKYE</sequence>
<accession>Q8NXN3</accession>
<protein>
    <recommendedName>
        <fullName evidence="1">Histidinol-phosphate aminotransferase</fullName>
        <ecNumber evidence="1">2.6.1.9</ecNumber>
    </recommendedName>
    <alternativeName>
        <fullName evidence="1">Imidazole acetol-phosphate transaminase</fullName>
    </alternativeName>
</protein>
<reference key="1">
    <citation type="journal article" date="2002" name="Lancet">
        <title>Genome and virulence determinants of high virulence community-acquired MRSA.</title>
        <authorList>
            <person name="Baba T."/>
            <person name="Takeuchi F."/>
            <person name="Kuroda M."/>
            <person name="Yuzawa H."/>
            <person name="Aoki K."/>
            <person name="Oguchi A."/>
            <person name="Nagai Y."/>
            <person name="Iwama N."/>
            <person name="Asano K."/>
            <person name="Naimi T."/>
            <person name="Kuroda H."/>
            <person name="Cui L."/>
            <person name="Yamamoto K."/>
            <person name="Hiramatsu K."/>
        </authorList>
    </citation>
    <scope>NUCLEOTIDE SEQUENCE [LARGE SCALE GENOMIC DNA]</scope>
    <source>
        <strain>MW2</strain>
    </source>
</reference>
<comment type="catalytic activity">
    <reaction evidence="1">
        <text>L-histidinol phosphate + 2-oxoglutarate = 3-(imidazol-4-yl)-2-oxopropyl phosphate + L-glutamate</text>
        <dbReference type="Rhea" id="RHEA:23744"/>
        <dbReference type="ChEBI" id="CHEBI:16810"/>
        <dbReference type="ChEBI" id="CHEBI:29985"/>
        <dbReference type="ChEBI" id="CHEBI:57766"/>
        <dbReference type="ChEBI" id="CHEBI:57980"/>
        <dbReference type="EC" id="2.6.1.9"/>
    </reaction>
</comment>
<comment type="cofactor">
    <cofactor evidence="1">
        <name>pyridoxal 5'-phosphate</name>
        <dbReference type="ChEBI" id="CHEBI:597326"/>
    </cofactor>
</comment>
<comment type="pathway">
    <text evidence="1">Amino-acid biosynthesis; L-histidine biosynthesis; L-histidine from 5-phospho-alpha-D-ribose 1-diphosphate: step 7/9.</text>
</comment>
<comment type="subunit">
    <text evidence="1">Homodimer.</text>
</comment>
<comment type="similarity">
    <text evidence="1">Belongs to the class-II pyridoxal-phosphate-dependent aminotransferase family. Histidinol-phosphate aminotransferase subfamily.</text>
</comment>
<evidence type="ECO:0000255" key="1">
    <source>
        <dbReference type="HAMAP-Rule" id="MF_01023"/>
    </source>
</evidence>